<accession>Q4UKT4</accession>
<evidence type="ECO:0000255" key="1">
    <source>
        <dbReference type="HAMAP-Rule" id="MF_00938"/>
    </source>
</evidence>
<feature type="chain" id="PRO_0000273118" description="DNA topoisomerase 4 subunit B">
    <location>
        <begin position="1"/>
        <end position="662"/>
    </location>
</feature>
<feature type="domain" description="Toprim" evidence="1">
    <location>
        <begin position="439"/>
        <end position="553"/>
    </location>
</feature>
<feature type="binding site" evidence="1">
    <location>
        <position position="20"/>
    </location>
    <ligand>
        <name>ATP</name>
        <dbReference type="ChEBI" id="CHEBI:30616"/>
    </ligand>
</feature>
<feature type="binding site" evidence="1">
    <location>
        <position position="60"/>
    </location>
    <ligand>
        <name>ATP</name>
        <dbReference type="ChEBI" id="CHEBI:30616"/>
    </ligand>
</feature>
<feature type="binding site" evidence="1">
    <location>
        <position position="87"/>
    </location>
    <ligand>
        <name>ATP</name>
        <dbReference type="ChEBI" id="CHEBI:30616"/>
    </ligand>
</feature>
<feature type="binding site" evidence="1">
    <location>
        <begin position="129"/>
        <end position="135"/>
    </location>
    <ligand>
        <name>ATP</name>
        <dbReference type="ChEBI" id="CHEBI:30616"/>
    </ligand>
</feature>
<feature type="binding site" evidence="1">
    <location>
        <position position="359"/>
    </location>
    <ligand>
        <name>ATP</name>
        <dbReference type="ChEBI" id="CHEBI:30616"/>
    </ligand>
</feature>
<feature type="binding site" evidence="1">
    <location>
        <position position="445"/>
    </location>
    <ligand>
        <name>Mg(2+)</name>
        <dbReference type="ChEBI" id="CHEBI:18420"/>
        <label>1</label>
        <note>catalytic</note>
    </ligand>
</feature>
<feature type="binding site" evidence="1">
    <location>
        <position position="518"/>
    </location>
    <ligand>
        <name>Mg(2+)</name>
        <dbReference type="ChEBI" id="CHEBI:18420"/>
        <label>1</label>
        <note>catalytic</note>
    </ligand>
</feature>
<feature type="binding site" evidence="1">
    <location>
        <position position="518"/>
    </location>
    <ligand>
        <name>Mg(2+)</name>
        <dbReference type="ChEBI" id="CHEBI:18420"/>
        <label>2</label>
    </ligand>
</feature>
<feature type="binding site" evidence="1">
    <location>
        <position position="520"/>
    </location>
    <ligand>
        <name>Mg(2+)</name>
        <dbReference type="ChEBI" id="CHEBI:18420"/>
        <label>2</label>
    </ligand>
</feature>
<feature type="site" description="Interaction with DNA" evidence="1">
    <location>
        <position position="470"/>
    </location>
</feature>
<feature type="site" description="Interaction with DNA" evidence="1">
    <location>
        <position position="473"/>
    </location>
</feature>
<feature type="site" description="Interaction with DNA" evidence="1">
    <location>
        <position position="525"/>
    </location>
</feature>
<feature type="site" description="Interaction with DNA" evidence="1">
    <location>
        <position position="641"/>
    </location>
</feature>
<keyword id="KW-0067">ATP-binding</keyword>
<keyword id="KW-0238">DNA-binding</keyword>
<keyword id="KW-0413">Isomerase</keyword>
<keyword id="KW-0460">Magnesium</keyword>
<keyword id="KW-0479">Metal-binding</keyword>
<keyword id="KW-0547">Nucleotide-binding</keyword>
<keyword id="KW-0799">Topoisomerase</keyword>
<organism>
    <name type="scientific">Rickettsia felis (strain ATCC VR-1525 / URRWXCal2)</name>
    <name type="common">Rickettsia azadi</name>
    <dbReference type="NCBI Taxonomy" id="315456"/>
    <lineage>
        <taxon>Bacteria</taxon>
        <taxon>Pseudomonadati</taxon>
        <taxon>Pseudomonadota</taxon>
        <taxon>Alphaproteobacteria</taxon>
        <taxon>Rickettsiales</taxon>
        <taxon>Rickettsiaceae</taxon>
        <taxon>Rickettsieae</taxon>
        <taxon>Rickettsia</taxon>
        <taxon>spotted fever group</taxon>
    </lineage>
</organism>
<sequence>MSDLFSFNKEKKNKLVDNNYSAKDIEVLEGLEPVRKRPGMYIGGTDSNAMHHLVSEVLDNAMDEAVAGFASIITIKMHQDHSITIFDNGRGIPIDNHPKFPDKSALEVILTTLHSGGKFSNNVYHTAGGLHGVGISVVNALSKHLEIKVYKQGKLYSQSYSKGEKLTDLICEEASKRLRGTSINFTPDPEIFSEKLHFNPKKIYELARSKAYLYRGVTIEWECEVEVPSDIPKKALINFPNGLKDYLSSKITLDNLIIPEIFSGNIESTPDEIKLEWAICWQNNDNSAFIQSYCNTVPTPQGGTHEQGLKSAILRGLKAYGEMIGNKKAANLTIEDILETASVVLSIFIAEPSFQGQTKEKLVSNGVSKPVENIIKDHFDHFLSSDKALATNLLEHVIAIAEFRISKKNEKNISRKNATQKLRLPGKLADCTRTTPGGTELFIVEGDSAGGSAKQARNRETQAVLPLWGKVLNVASSTLEKIVNNQAIQDLEIALACGSLKNYKEENLRYEKIIIMTDADVDGAHIASLLMTFFFLRMPKLVEEGHLYLAKPPLYRLTQSNKTYYAGDEEEKAKLTDKLSKASKAKIEVGRFKGLGEMMPAQLKETTMHPEKRSLLKVTLEDFQNVDKIVDDLMGKKPEKRFQFIYEQALVKMDKIINELDI</sequence>
<dbReference type="EC" id="5.6.2.2" evidence="1"/>
<dbReference type="EMBL" id="CP000053">
    <property type="protein sequence ID" value="AAY61839.1"/>
    <property type="molecule type" value="Genomic_DNA"/>
</dbReference>
<dbReference type="SMR" id="Q4UKT4"/>
<dbReference type="STRING" id="315456.RF_0988"/>
<dbReference type="KEGG" id="rfe:RF_0988"/>
<dbReference type="eggNOG" id="COG0187">
    <property type="taxonomic scope" value="Bacteria"/>
</dbReference>
<dbReference type="HOGENOM" id="CLU_006146_4_1_5"/>
<dbReference type="OrthoDB" id="9802808at2"/>
<dbReference type="Proteomes" id="UP000008548">
    <property type="component" value="Chromosome"/>
</dbReference>
<dbReference type="GO" id="GO:0005694">
    <property type="term" value="C:chromosome"/>
    <property type="evidence" value="ECO:0007669"/>
    <property type="project" value="InterPro"/>
</dbReference>
<dbReference type="GO" id="GO:0005524">
    <property type="term" value="F:ATP binding"/>
    <property type="evidence" value="ECO:0007669"/>
    <property type="project" value="UniProtKB-UniRule"/>
</dbReference>
<dbReference type="GO" id="GO:0003677">
    <property type="term" value="F:DNA binding"/>
    <property type="evidence" value="ECO:0007669"/>
    <property type="project" value="UniProtKB-UniRule"/>
</dbReference>
<dbReference type="GO" id="GO:0003918">
    <property type="term" value="F:DNA topoisomerase type II (double strand cut, ATP-hydrolyzing) activity"/>
    <property type="evidence" value="ECO:0007669"/>
    <property type="project" value="UniProtKB-UniRule"/>
</dbReference>
<dbReference type="GO" id="GO:0046872">
    <property type="term" value="F:metal ion binding"/>
    <property type="evidence" value="ECO:0007669"/>
    <property type="project" value="UniProtKB-KW"/>
</dbReference>
<dbReference type="GO" id="GO:0007059">
    <property type="term" value="P:chromosome segregation"/>
    <property type="evidence" value="ECO:0007669"/>
    <property type="project" value="UniProtKB-UniRule"/>
</dbReference>
<dbReference type="GO" id="GO:0006265">
    <property type="term" value="P:DNA topological change"/>
    <property type="evidence" value="ECO:0007669"/>
    <property type="project" value="UniProtKB-UniRule"/>
</dbReference>
<dbReference type="CDD" id="cd16928">
    <property type="entry name" value="HATPase_GyrB-like"/>
    <property type="match status" value="1"/>
</dbReference>
<dbReference type="CDD" id="cd00822">
    <property type="entry name" value="TopoII_Trans_DNA_gyrase"/>
    <property type="match status" value="1"/>
</dbReference>
<dbReference type="FunFam" id="3.30.565.10:FF:000002">
    <property type="entry name" value="DNA gyrase subunit B"/>
    <property type="match status" value="1"/>
</dbReference>
<dbReference type="FunFam" id="3.40.50.670:FF:000006">
    <property type="entry name" value="DNA topoisomerase (ATP-hydrolyzing)"/>
    <property type="match status" value="1"/>
</dbReference>
<dbReference type="Gene3D" id="3.30.230.10">
    <property type="match status" value="1"/>
</dbReference>
<dbReference type="Gene3D" id="3.40.50.670">
    <property type="match status" value="1"/>
</dbReference>
<dbReference type="Gene3D" id="3.30.565.10">
    <property type="entry name" value="Histidine kinase-like ATPase, C-terminal domain"/>
    <property type="match status" value="1"/>
</dbReference>
<dbReference type="HAMAP" id="MF_00938">
    <property type="entry name" value="ParE_type1"/>
    <property type="match status" value="1"/>
</dbReference>
<dbReference type="InterPro" id="IPR002288">
    <property type="entry name" value="DNA_gyrase_B_C"/>
</dbReference>
<dbReference type="InterPro" id="IPR036890">
    <property type="entry name" value="HATPase_C_sf"/>
</dbReference>
<dbReference type="InterPro" id="IPR020568">
    <property type="entry name" value="Ribosomal_Su5_D2-typ_SF"/>
</dbReference>
<dbReference type="InterPro" id="IPR014721">
    <property type="entry name" value="Ribsml_uS5_D2-typ_fold_subgr"/>
</dbReference>
<dbReference type="InterPro" id="IPR001241">
    <property type="entry name" value="Topo_IIA"/>
</dbReference>
<dbReference type="InterPro" id="IPR013760">
    <property type="entry name" value="Topo_IIA-like_dom_sf"/>
</dbReference>
<dbReference type="InterPro" id="IPR000565">
    <property type="entry name" value="Topo_IIA_B"/>
</dbReference>
<dbReference type="InterPro" id="IPR013759">
    <property type="entry name" value="Topo_IIA_B_C"/>
</dbReference>
<dbReference type="InterPro" id="IPR013506">
    <property type="entry name" value="Topo_IIA_bsu_dom2"/>
</dbReference>
<dbReference type="InterPro" id="IPR018522">
    <property type="entry name" value="TopoIIA_CS"/>
</dbReference>
<dbReference type="InterPro" id="IPR005737">
    <property type="entry name" value="TopoIV_B_Gneg"/>
</dbReference>
<dbReference type="InterPro" id="IPR006171">
    <property type="entry name" value="TOPRIM_dom"/>
</dbReference>
<dbReference type="NCBIfam" id="TIGR01055">
    <property type="entry name" value="parE_Gneg"/>
    <property type="match status" value="1"/>
</dbReference>
<dbReference type="PANTHER" id="PTHR45866:SF1">
    <property type="entry name" value="DNA GYRASE SUBUNIT B, MITOCHONDRIAL"/>
    <property type="match status" value="1"/>
</dbReference>
<dbReference type="PANTHER" id="PTHR45866">
    <property type="entry name" value="DNA GYRASE/TOPOISOMERASE SUBUNIT B"/>
    <property type="match status" value="1"/>
</dbReference>
<dbReference type="Pfam" id="PF00204">
    <property type="entry name" value="DNA_gyraseB"/>
    <property type="match status" value="1"/>
</dbReference>
<dbReference type="Pfam" id="PF00986">
    <property type="entry name" value="DNA_gyraseB_C"/>
    <property type="match status" value="1"/>
</dbReference>
<dbReference type="Pfam" id="PF02518">
    <property type="entry name" value="HATPase_c"/>
    <property type="match status" value="1"/>
</dbReference>
<dbReference type="Pfam" id="PF01751">
    <property type="entry name" value="Toprim"/>
    <property type="match status" value="1"/>
</dbReference>
<dbReference type="PRINTS" id="PR01159">
    <property type="entry name" value="DNAGYRASEB"/>
</dbReference>
<dbReference type="PRINTS" id="PR00418">
    <property type="entry name" value="TPI2FAMILY"/>
</dbReference>
<dbReference type="SMART" id="SM00387">
    <property type="entry name" value="HATPase_c"/>
    <property type="match status" value="1"/>
</dbReference>
<dbReference type="SMART" id="SM00433">
    <property type="entry name" value="TOP2c"/>
    <property type="match status" value="1"/>
</dbReference>
<dbReference type="SUPFAM" id="SSF55874">
    <property type="entry name" value="ATPase domain of HSP90 chaperone/DNA topoisomerase II/histidine kinase"/>
    <property type="match status" value="1"/>
</dbReference>
<dbReference type="SUPFAM" id="SSF54211">
    <property type="entry name" value="Ribosomal protein S5 domain 2-like"/>
    <property type="match status" value="1"/>
</dbReference>
<dbReference type="SUPFAM" id="SSF56719">
    <property type="entry name" value="Type II DNA topoisomerase"/>
    <property type="match status" value="1"/>
</dbReference>
<dbReference type="PROSITE" id="PS00177">
    <property type="entry name" value="TOPOISOMERASE_II"/>
    <property type="match status" value="1"/>
</dbReference>
<dbReference type="PROSITE" id="PS50880">
    <property type="entry name" value="TOPRIM"/>
    <property type="match status" value="1"/>
</dbReference>
<comment type="function">
    <text evidence="1">Topoisomerase IV is essential for chromosome segregation. It relaxes supercoiled DNA. Performs the decatenation events required during the replication of a circular DNA molecule.</text>
</comment>
<comment type="catalytic activity">
    <reaction evidence="1">
        <text>ATP-dependent breakage, passage and rejoining of double-stranded DNA.</text>
        <dbReference type="EC" id="5.6.2.2"/>
    </reaction>
</comment>
<comment type="cofactor">
    <cofactor evidence="1">
        <name>Mg(2+)</name>
        <dbReference type="ChEBI" id="CHEBI:18420"/>
    </cofactor>
    <cofactor evidence="1">
        <name>Mn(2+)</name>
        <dbReference type="ChEBI" id="CHEBI:29035"/>
    </cofactor>
    <cofactor evidence="1">
        <name>Ca(2+)</name>
        <dbReference type="ChEBI" id="CHEBI:29108"/>
    </cofactor>
    <text evidence="1">Binds two Mg(2+) per subunit. The magnesium ions form salt bridges with both the protein and the DNA. Can also accept other divalent metal cations, such as Mn(2+) or Ca(2+).</text>
</comment>
<comment type="subunit">
    <text evidence="1">Heterotetramer composed of ParC and ParE.</text>
</comment>
<comment type="similarity">
    <text evidence="1">Belongs to the type II topoisomerase family. ParE type 1 subfamily.</text>
</comment>
<proteinExistence type="inferred from homology"/>
<reference key="1">
    <citation type="journal article" date="2005" name="PLoS Biol.">
        <title>The genome sequence of Rickettsia felis identifies the first putative conjugative plasmid in an obligate intracellular parasite.</title>
        <authorList>
            <person name="Ogata H."/>
            <person name="Renesto P."/>
            <person name="Audic S."/>
            <person name="Robert C."/>
            <person name="Blanc G."/>
            <person name="Fournier P.-E."/>
            <person name="Parinello H."/>
            <person name="Claverie J.-M."/>
            <person name="Raoult D."/>
        </authorList>
    </citation>
    <scope>NUCLEOTIDE SEQUENCE [LARGE SCALE GENOMIC DNA]</scope>
    <source>
        <strain>ATCC VR-1525 / URRWXCal2</strain>
    </source>
</reference>
<name>PARE_RICFE</name>
<gene>
    <name evidence="1" type="primary">parE</name>
    <name type="ordered locus">RF_0988</name>
</gene>
<protein>
    <recommendedName>
        <fullName evidence="1">DNA topoisomerase 4 subunit B</fullName>
        <ecNumber evidence="1">5.6.2.2</ecNumber>
    </recommendedName>
    <alternativeName>
        <fullName evidence="1">Topoisomerase IV subunit B</fullName>
    </alternativeName>
</protein>